<feature type="chain" id="PRO_0000242616" description="UDP-N-acetylmuramate--L-alanine ligase">
    <location>
        <begin position="1"/>
        <end position="477"/>
    </location>
</feature>
<feature type="binding site" evidence="1">
    <location>
        <begin position="122"/>
        <end position="128"/>
    </location>
    <ligand>
        <name>ATP</name>
        <dbReference type="ChEBI" id="CHEBI:30616"/>
    </ligand>
</feature>
<evidence type="ECO:0000255" key="1">
    <source>
        <dbReference type="HAMAP-Rule" id="MF_00046"/>
    </source>
</evidence>
<reference key="1">
    <citation type="journal article" date="2005" name="Genome Res.">
        <title>Comparative and functional genomic analyses of the pathogenicity of phytopathogen Xanthomonas campestris pv. campestris.</title>
        <authorList>
            <person name="Qian W."/>
            <person name="Jia Y."/>
            <person name="Ren S.-X."/>
            <person name="He Y.-Q."/>
            <person name="Feng J.-X."/>
            <person name="Lu L.-F."/>
            <person name="Sun Q."/>
            <person name="Ying G."/>
            <person name="Tang D.-J."/>
            <person name="Tang H."/>
            <person name="Wu W."/>
            <person name="Hao P."/>
            <person name="Wang L."/>
            <person name="Jiang B.-L."/>
            <person name="Zeng S."/>
            <person name="Gu W.-Y."/>
            <person name="Lu G."/>
            <person name="Rong L."/>
            <person name="Tian Y."/>
            <person name="Yao Z."/>
            <person name="Fu G."/>
            <person name="Chen B."/>
            <person name="Fang R."/>
            <person name="Qiang B."/>
            <person name="Chen Z."/>
            <person name="Zhao G.-P."/>
            <person name="Tang J.-L."/>
            <person name="He C."/>
        </authorList>
    </citation>
    <scope>NUCLEOTIDE SEQUENCE [LARGE SCALE GENOMIC DNA]</scope>
    <source>
        <strain>8004</strain>
    </source>
</reference>
<organism>
    <name type="scientific">Xanthomonas campestris pv. campestris (strain 8004)</name>
    <dbReference type="NCBI Taxonomy" id="314565"/>
    <lineage>
        <taxon>Bacteria</taxon>
        <taxon>Pseudomonadati</taxon>
        <taxon>Pseudomonadota</taxon>
        <taxon>Gammaproteobacteria</taxon>
        <taxon>Lysobacterales</taxon>
        <taxon>Lysobacteraceae</taxon>
        <taxon>Xanthomonas</taxon>
    </lineage>
</organism>
<comment type="function">
    <text evidence="1">Cell wall formation.</text>
</comment>
<comment type="catalytic activity">
    <reaction evidence="1">
        <text>UDP-N-acetyl-alpha-D-muramate + L-alanine + ATP = UDP-N-acetyl-alpha-D-muramoyl-L-alanine + ADP + phosphate + H(+)</text>
        <dbReference type="Rhea" id="RHEA:23372"/>
        <dbReference type="ChEBI" id="CHEBI:15378"/>
        <dbReference type="ChEBI" id="CHEBI:30616"/>
        <dbReference type="ChEBI" id="CHEBI:43474"/>
        <dbReference type="ChEBI" id="CHEBI:57972"/>
        <dbReference type="ChEBI" id="CHEBI:70757"/>
        <dbReference type="ChEBI" id="CHEBI:83898"/>
        <dbReference type="ChEBI" id="CHEBI:456216"/>
        <dbReference type="EC" id="6.3.2.8"/>
    </reaction>
</comment>
<comment type="pathway">
    <text evidence="1">Cell wall biogenesis; peptidoglycan biosynthesis.</text>
</comment>
<comment type="subcellular location">
    <subcellularLocation>
        <location evidence="1">Cytoplasm</location>
    </subcellularLocation>
</comment>
<comment type="similarity">
    <text evidence="1">Belongs to the MurCDEF family.</text>
</comment>
<sequence>MIRRLQDSGDLVRAFPRVHFVGIGGTGMSGIAEVMLTLGYEVSGSDNADNAATRRLAKLGARVMRGHSAANVLGTDCVVVSSAIREDNPELMEARSQRIPIMPRAAMLAELMRFRRGIAVAGTHGKTTTTSLAAAVLSEGGLDPTFVIGGQLLAAGANAKLGGGQWLVAEADESDGSFLRLNPLMAVITNIDADHLENYGNDFARVQAAFAEFLQRLPFYGLALLCIDDPEVAALAGKTPRHVMSYGMSENADVRAEDVVQDGPRMRFTLRLPEGTTTPVTLALPGRHNVLNALAAAAIGWQLGVAPDTIARALENFAGIGRRFNDLGEVTTASGARVRVVDDYGHHPRELEAVFAAARGGWPDKRLVVAFQPHRYSRTRDQFDAFAAVLSTVDALVLSEVYPAGEAPIPGADSRALARAIRARGRSEPVVVGQVAGLSEVLPDVLQDGDLLLMMGAGDIGYVAQQIVTDGFVGAPA</sequence>
<gene>
    <name evidence="1" type="primary">murC</name>
    <name type="ordered locus">XC_3509</name>
</gene>
<dbReference type="EC" id="6.3.2.8" evidence="1"/>
<dbReference type="EMBL" id="CP000050">
    <property type="protein sequence ID" value="AAY50552.1"/>
    <property type="molecule type" value="Genomic_DNA"/>
</dbReference>
<dbReference type="RefSeq" id="WP_011035963.1">
    <property type="nucleotide sequence ID" value="NZ_CP155948.1"/>
</dbReference>
<dbReference type="SMR" id="Q4UQX1"/>
<dbReference type="GeneID" id="58014707"/>
<dbReference type="KEGG" id="xcb:XC_3509"/>
<dbReference type="HOGENOM" id="CLU_028104_2_2_6"/>
<dbReference type="UniPathway" id="UPA00219"/>
<dbReference type="Proteomes" id="UP000000420">
    <property type="component" value="Chromosome"/>
</dbReference>
<dbReference type="GO" id="GO:0005737">
    <property type="term" value="C:cytoplasm"/>
    <property type="evidence" value="ECO:0007669"/>
    <property type="project" value="UniProtKB-SubCell"/>
</dbReference>
<dbReference type="GO" id="GO:0005524">
    <property type="term" value="F:ATP binding"/>
    <property type="evidence" value="ECO:0007669"/>
    <property type="project" value="UniProtKB-UniRule"/>
</dbReference>
<dbReference type="GO" id="GO:0008763">
    <property type="term" value="F:UDP-N-acetylmuramate-L-alanine ligase activity"/>
    <property type="evidence" value="ECO:0007669"/>
    <property type="project" value="UniProtKB-UniRule"/>
</dbReference>
<dbReference type="GO" id="GO:0051301">
    <property type="term" value="P:cell division"/>
    <property type="evidence" value="ECO:0007669"/>
    <property type="project" value="UniProtKB-KW"/>
</dbReference>
<dbReference type="GO" id="GO:0071555">
    <property type="term" value="P:cell wall organization"/>
    <property type="evidence" value="ECO:0007669"/>
    <property type="project" value="UniProtKB-KW"/>
</dbReference>
<dbReference type="GO" id="GO:0009252">
    <property type="term" value="P:peptidoglycan biosynthetic process"/>
    <property type="evidence" value="ECO:0007669"/>
    <property type="project" value="UniProtKB-UniRule"/>
</dbReference>
<dbReference type="GO" id="GO:0008360">
    <property type="term" value="P:regulation of cell shape"/>
    <property type="evidence" value="ECO:0007669"/>
    <property type="project" value="UniProtKB-KW"/>
</dbReference>
<dbReference type="Gene3D" id="3.90.190.20">
    <property type="entry name" value="Mur ligase, C-terminal domain"/>
    <property type="match status" value="1"/>
</dbReference>
<dbReference type="Gene3D" id="3.40.1190.10">
    <property type="entry name" value="Mur-like, catalytic domain"/>
    <property type="match status" value="1"/>
</dbReference>
<dbReference type="Gene3D" id="3.40.50.720">
    <property type="entry name" value="NAD(P)-binding Rossmann-like Domain"/>
    <property type="match status" value="1"/>
</dbReference>
<dbReference type="HAMAP" id="MF_00046">
    <property type="entry name" value="MurC"/>
    <property type="match status" value="1"/>
</dbReference>
<dbReference type="InterPro" id="IPR036565">
    <property type="entry name" value="Mur-like_cat_sf"/>
</dbReference>
<dbReference type="InterPro" id="IPR004101">
    <property type="entry name" value="Mur_ligase_C"/>
</dbReference>
<dbReference type="InterPro" id="IPR036615">
    <property type="entry name" value="Mur_ligase_C_dom_sf"/>
</dbReference>
<dbReference type="InterPro" id="IPR013221">
    <property type="entry name" value="Mur_ligase_cen"/>
</dbReference>
<dbReference type="InterPro" id="IPR000713">
    <property type="entry name" value="Mur_ligase_N"/>
</dbReference>
<dbReference type="InterPro" id="IPR050061">
    <property type="entry name" value="MurCDEF_pg_biosynth"/>
</dbReference>
<dbReference type="InterPro" id="IPR005758">
    <property type="entry name" value="UDP-N-AcMur_Ala_ligase_MurC"/>
</dbReference>
<dbReference type="NCBIfam" id="TIGR01082">
    <property type="entry name" value="murC"/>
    <property type="match status" value="1"/>
</dbReference>
<dbReference type="PANTHER" id="PTHR43445:SF3">
    <property type="entry name" value="UDP-N-ACETYLMURAMATE--L-ALANINE LIGASE"/>
    <property type="match status" value="1"/>
</dbReference>
<dbReference type="PANTHER" id="PTHR43445">
    <property type="entry name" value="UDP-N-ACETYLMURAMATE--L-ALANINE LIGASE-RELATED"/>
    <property type="match status" value="1"/>
</dbReference>
<dbReference type="Pfam" id="PF01225">
    <property type="entry name" value="Mur_ligase"/>
    <property type="match status" value="1"/>
</dbReference>
<dbReference type="Pfam" id="PF02875">
    <property type="entry name" value="Mur_ligase_C"/>
    <property type="match status" value="1"/>
</dbReference>
<dbReference type="Pfam" id="PF08245">
    <property type="entry name" value="Mur_ligase_M"/>
    <property type="match status" value="1"/>
</dbReference>
<dbReference type="SUPFAM" id="SSF51984">
    <property type="entry name" value="MurCD N-terminal domain"/>
    <property type="match status" value="1"/>
</dbReference>
<dbReference type="SUPFAM" id="SSF53623">
    <property type="entry name" value="MurD-like peptide ligases, catalytic domain"/>
    <property type="match status" value="1"/>
</dbReference>
<dbReference type="SUPFAM" id="SSF53244">
    <property type="entry name" value="MurD-like peptide ligases, peptide-binding domain"/>
    <property type="match status" value="1"/>
</dbReference>
<protein>
    <recommendedName>
        <fullName evidence="1">UDP-N-acetylmuramate--L-alanine ligase</fullName>
        <ecNumber evidence="1">6.3.2.8</ecNumber>
    </recommendedName>
    <alternativeName>
        <fullName evidence="1">UDP-N-acetylmuramoyl-L-alanine synthetase</fullName>
    </alternativeName>
</protein>
<keyword id="KW-0067">ATP-binding</keyword>
<keyword id="KW-0131">Cell cycle</keyword>
<keyword id="KW-0132">Cell division</keyword>
<keyword id="KW-0133">Cell shape</keyword>
<keyword id="KW-0961">Cell wall biogenesis/degradation</keyword>
<keyword id="KW-0963">Cytoplasm</keyword>
<keyword id="KW-0436">Ligase</keyword>
<keyword id="KW-0547">Nucleotide-binding</keyword>
<keyword id="KW-0573">Peptidoglycan synthesis</keyword>
<name>MURC_XANC8</name>
<proteinExistence type="inferred from homology"/>
<accession>Q4UQX1</accession>